<geneLocation type="mitochondrion"/>
<proteinExistence type="inferred from homology"/>
<comment type="function">
    <text evidence="2">Component of the ubiquinol-cytochrome c reductase complex (complex III or cytochrome b-c1 complex) that is part of the mitochondrial respiratory chain. The b-c1 complex mediates electron transfer from ubiquinol to cytochrome c. Contributes to the generation of a proton gradient across the mitochondrial membrane that is then used for ATP synthesis.</text>
</comment>
<comment type="cofactor">
    <cofactor evidence="2">
        <name>heme b</name>
        <dbReference type="ChEBI" id="CHEBI:60344"/>
    </cofactor>
    <text evidence="2">Binds 2 heme b groups non-covalently.</text>
</comment>
<comment type="subunit">
    <text evidence="2">The cytochrome bc1 complex contains 11 subunits: 3 respiratory subunits (MT-CYB, CYC1 and UQCRFS1), 2 core proteins (UQCRC1 and UQCRC2) and 6 low-molecular weight proteins (UQCRH/QCR6, UQCRB/QCR7, UQCRQ/QCR8, UQCR10/QCR9, UQCR11/QCR10 and a cleavage product of UQCRFS1). This cytochrome bc1 complex then forms a dimer.</text>
</comment>
<comment type="subcellular location">
    <subcellularLocation>
        <location evidence="2">Mitochondrion inner membrane</location>
        <topology evidence="2">Multi-pass membrane protein</topology>
    </subcellularLocation>
</comment>
<comment type="miscellaneous">
    <text evidence="1">Heme 1 (or BL or b562) is low-potential and absorbs at about 562 nm, and heme 2 (or BH or b566) is high-potential and absorbs at about 566 nm.</text>
</comment>
<comment type="similarity">
    <text evidence="3 4">Belongs to the cytochrome b family.</text>
</comment>
<comment type="caution">
    <text evidence="2">The full-length protein contains only eight transmembrane helices, not nine as predicted by bioinformatics tools.</text>
</comment>
<name>CYB_STECO</name>
<evidence type="ECO:0000250" key="1"/>
<evidence type="ECO:0000250" key="2">
    <source>
        <dbReference type="UniProtKB" id="P00157"/>
    </source>
</evidence>
<evidence type="ECO:0000255" key="3">
    <source>
        <dbReference type="PROSITE-ProRule" id="PRU00967"/>
    </source>
</evidence>
<evidence type="ECO:0000255" key="4">
    <source>
        <dbReference type="PROSITE-ProRule" id="PRU00968"/>
    </source>
</evidence>
<reference key="1">
    <citation type="journal article" date="1999" name="Mar. Mamm. Sci.">
        <title>Phylogenetic relationships among the delphinid cetaceans based on full cytochrome b sequences.</title>
        <authorList>
            <person name="LeDuc R.G."/>
            <person name="Perrin W.F."/>
            <person name="Dizon A.E."/>
        </authorList>
    </citation>
    <scope>NUCLEOTIDE SEQUENCE [GENOMIC DNA]</scope>
</reference>
<feature type="chain" id="PRO_0000061614" description="Cytochrome b">
    <location>
        <begin position="1"/>
        <end position="379"/>
    </location>
</feature>
<feature type="transmembrane region" description="Helical" evidence="2">
    <location>
        <begin position="33"/>
        <end position="53"/>
    </location>
</feature>
<feature type="transmembrane region" description="Helical" evidence="2">
    <location>
        <begin position="77"/>
        <end position="98"/>
    </location>
</feature>
<feature type="transmembrane region" description="Helical" evidence="2">
    <location>
        <begin position="113"/>
        <end position="133"/>
    </location>
</feature>
<feature type="transmembrane region" description="Helical" evidence="2">
    <location>
        <begin position="178"/>
        <end position="198"/>
    </location>
</feature>
<feature type="transmembrane region" description="Helical" evidence="2">
    <location>
        <begin position="226"/>
        <end position="246"/>
    </location>
</feature>
<feature type="transmembrane region" description="Helical" evidence="2">
    <location>
        <begin position="288"/>
        <end position="308"/>
    </location>
</feature>
<feature type="transmembrane region" description="Helical" evidence="2">
    <location>
        <begin position="320"/>
        <end position="340"/>
    </location>
</feature>
<feature type="transmembrane region" description="Helical" evidence="2">
    <location>
        <begin position="347"/>
        <end position="367"/>
    </location>
</feature>
<feature type="binding site" description="axial binding residue" evidence="2">
    <location>
        <position position="83"/>
    </location>
    <ligand>
        <name>heme b</name>
        <dbReference type="ChEBI" id="CHEBI:60344"/>
        <label>b562</label>
    </ligand>
    <ligandPart>
        <name>Fe</name>
        <dbReference type="ChEBI" id="CHEBI:18248"/>
    </ligandPart>
</feature>
<feature type="binding site" description="axial binding residue" evidence="2">
    <location>
        <position position="97"/>
    </location>
    <ligand>
        <name>heme b</name>
        <dbReference type="ChEBI" id="CHEBI:60344"/>
        <label>b566</label>
    </ligand>
    <ligandPart>
        <name>Fe</name>
        <dbReference type="ChEBI" id="CHEBI:18248"/>
    </ligandPart>
</feature>
<feature type="binding site" description="axial binding residue" evidence="2">
    <location>
        <position position="182"/>
    </location>
    <ligand>
        <name>heme b</name>
        <dbReference type="ChEBI" id="CHEBI:60344"/>
        <label>b562</label>
    </ligand>
    <ligandPart>
        <name>Fe</name>
        <dbReference type="ChEBI" id="CHEBI:18248"/>
    </ligandPart>
</feature>
<feature type="binding site" description="axial binding residue" evidence="2">
    <location>
        <position position="196"/>
    </location>
    <ligand>
        <name>heme b</name>
        <dbReference type="ChEBI" id="CHEBI:60344"/>
        <label>b566</label>
    </ligand>
    <ligandPart>
        <name>Fe</name>
        <dbReference type="ChEBI" id="CHEBI:18248"/>
    </ligandPart>
</feature>
<feature type="binding site" evidence="2">
    <location>
        <position position="201"/>
    </location>
    <ligand>
        <name>a ubiquinone</name>
        <dbReference type="ChEBI" id="CHEBI:16389"/>
    </ligand>
</feature>
<accession>P68094</accession>
<accession>P24961</accession>
<accession>Q9T3G9</accession>
<dbReference type="EMBL" id="AF084081">
    <property type="protein sequence ID" value="AAD54458.1"/>
    <property type="molecule type" value="Genomic_DNA"/>
</dbReference>
<dbReference type="EMBL" id="AF084082">
    <property type="protein sequence ID" value="AAD54459.1"/>
    <property type="molecule type" value="Genomic_DNA"/>
</dbReference>
<dbReference type="RefSeq" id="YP_002586987.1">
    <property type="nucleotide sequence ID" value="NC_012053.1"/>
</dbReference>
<dbReference type="SMR" id="P68094"/>
<dbReference type="GeneID" id="7411700"/>
<dbReference type="CTD" id="4519"/>
<dbReference type="GO" id="GO:0005743">
    <property type="term" value="C:mitochondrial inner membrane"/>
    <property type="evidence" value="ECO:0007669"/>
    <property type="project" value="UniProtKB-SubCell"/>
</dbReference>
<dbReference type="GO" id="GO:0045275">
    <property type="term" value="C:respiratory chain complex III"/>
    <property type="evidence" value="ECO:0007669"/>
    <property type="project" value="InterPro"/>
</dbReference>
<dbReference type="GO" id="GO:0046872">
    <property type="term" value="F:metal ion binding"/>
    <property type="evidence" value="ECO:0007669"/>
    <property type="project" value="UniProtKB-KW"/>
</dbReference>
<dbReference type="GO" id="GO:0008121">
    <property type="term" value="F:ubiquinol-cytochrome-c reductase activity"/>
    <property type="evidence" value="ECO:0007669"/>
    <property type="project" value="InterPro"/>
</dbReference>
<dbReference type="GO" id="GO:0006122">
    <property type="term" value="P:mitochondrial electron transport, ubiquinol to cytochrome c"/>
    <property type="evidence" value="ECO:0007669"/>
    <property type="project" value="TreeGrafter"/>
</dbReference>
<dbReference type="CDD" id="cd00290">
    <property type="entry name" value="cytochrome_b_C"/>
    <property type="match status" value="1"/>
</dbReference>
<dbReference type="CDD" id="cd00284">
    <property type="entry name" value="Cytochrome_b_N"/>
    <property type="match status" value="1"/>
</dbReference>
<dbReference type="FunFam" id="1.20.810.10:FF:000002">
    <property type="entry name" value="Cytochrome b"/>
    <property type="match status" value="1"/>
</dbReference>
<dbReference type="Gene3D" id="1.20.810.10">
    <property type="entry name" value="Cytochrome Bc1 Complex, Chain C"/>
    <property type="match status" value="1"/>
</dbReference>
<dbReference type="InterPro" id="IPR005798">
    <property type="entry name" value="Cyt_b/b6_C"/>
</dbReference>
<dbReference type="InterPro" id="IPR036150">
    <property type="entry name" value="Cyt_b/b6_C_sf"/>
</dbReference>
<dbReference type="InterPro" id="IPR005797">
    <property type="entry name" value="Cyt_b/b6_N"/>
</dbReference>
<dbReference type="InterPro" id="IPR027387">
    <property type="entry name" value="Cytb/b6-like_sf"/>
</dbReference>
<dbReference type="InterPro" id="IPR030689">
    <property type="entry name" value="Cytochrome_b"/>
</dbReference>
<dbReference type="InterPro" id="IPR048260">
    <property type="entry name" value="Cytochrome_b_C_euk/bac"/>
</dbReference>
<dbReference type="InterPro" id="IPR048259">
    <property type="entry name" value="Cytochrome_b_N_euk/bac"/>
</dbReference>
<dbReference type="InterPro" id="IPR016174">
    <property type="entry name" value="Di-haem_cyt_TM"/>
</dbReference>
<dbReference type="PANTHER" id="PTHR19271">
    <property type="entry name" value="CYTOCHROME B"/>
    <property type="match status" value="1"/>
</dbReference>
<dbReference type="PANTHER" id="PTHR19271:SF16">
    <property type="entry name" value="CYTOCHROME B"/>
    <property type="match status" value="1"/>
</dbReference>
<dbReference type="Pfam" id="PF00032">
    <property type="entry name" value="Cytochrom_B_C"/>
    <property type="match status" value="1"/>
</dbReference>
<dbReference type="Pfam" id="PF00033">
    <property type="entry name" value="Cytochrome_B"/>
    <property type="match status" value="1"/>
</dbReference>
<dbReference type="PIRSF" id="PIRSF038885">
    <property type="entry name" value="COB"/>
    <property type="match status" value="1"/>
</dbReference>
<dbReference type="SUPFAM" id="SSF81648">
    <property type="entry name" value="a domain/subunit of cytochrome bc1 complex (Ubiquinol-cytochrome c reductase)"/>
    <property type="match status" value="1"/>
</dbReference>
<dbReference type="SUPFAM" id="SSF81342">
    <property type="entry name" value="Transmembrane di-heme cytochromes"/>
    <property type="match status" value="1"/>
</dbReference>
<dbReference type="PROSITE" id="PS51003">
    <property type="entry name" value="CYTB_CTER"/>
    <property type="match status" value="1"/>
</dbReference>
<dbReference type="PROSITE" id="PS51002">
    <property type="entry name" value="CYTB_NTER"/>
    <property type="match status" value="1"/>
</dbReference>
<keyword id="KW-0249">Electron transport</keyword>
<keyword id="KW-0349">Heme</keyword>
<keyword id="KW-0408">Iron</keyword>
<keyword id="KW-0472">Membrane</keyword>
<keyword id="KW-0479">Metal-binding</keyword>
<keyword id="KW-0496">Mitochondrion</keyword>
<keyword id="KW-0999">Mitochondrion inner membrane</keyword>
<keyword id="KW-0679">Respiratory chain</keyword>
<keyword id="KW-0812">Transmembrane</keyword>
<keyword id="KW-1133">Transmembrane helix</keyword>
<keyword id="KW-0813">Transport</keyword>
<keyword id="KW-0830">Ubiquinone</keyword>
<gene>
    <name type="primary">MT-CYB</name>
    <name type="synonym">COB</name>
    <name type="synonym">CYTB</name>
    <name type="synonym">MTCYB</name>
</gene>
<protein>
    <recommendedName>
        <fullName>Cytochrome b</fullName>
    </recommendedName>
    <alternativeName>
        <fullName>Complex III subunit 3</fullName>
    </alternativeName>
    <alternativeName>
        <fullName>Complex III subunit III</fullName>
    </alternativeName>
    <alternativeName>
        <fullName>Cytochrome b-c1 complex subunit 3</fullName>
    </alternativeName>
    <alternativeName>
        <fullName>Ubiquinol-cytochrome-c reductase complex cytochrome b subunit</fullName>
    </alternativeName>
</protein>
<organism>
    <name type="scientific">Stenella coeruleoalba</name>
    <name type="common">Striped dolphin</name>
    <name type="synonym">Delphinus coeruleoalbus</name>
    <dbReference type="NCBI Taxonomy" id="9737"/>
    <lineage>
        <taxon>Eukaryota</taxon>
        <taxon>Metazoa</taxon>
        <taxon>Chordata</taxon>
        <taxon>Craniata</taxon>
        <taxon>Vertebrata</taxon>
        <taxon>Euteleostomi</taxon>
        <taxon>Mammalia</taxon>
        <taxon>Eutheria</taxon>
        <taxon>Laurasiatheria</taxon>
        <taxon>Artiodactyla</taxon>
        <taxon>Whippomorpha</taxon>
        <taxon>Cetacea</taxon>
        <taxon>Odontoceti</taxon>
        <taxon>Delphinidae</taxon>
        <taxon>Stenella</taxon>
    </lineage>
</organism>
<sequence length="379" mass="42698">MTNIRKTHPLMKILNDAFIDLPTPSNISSWWNFGSLLGLCLIMQILTGLFLAMHYTPDTSTAFSSVAHICRDVNYGWFIRYLHANGASMFFICLYAHIGRGLYYGSYMFQETWNIGVLLLLTVMATAFVGYVLPWGQMSFWGATVITNLLSAIPYIGTTLVEWIWGGFSVDKATLTRFFAFHFILPFIITALAAVHLLFLHETGSNNPTGIPSNMDMIPFHPYYTIKDILGALLLILTLLALTLFTPDLLGDPDNYTPANPLSTPAHIKPEWYFLFAYAILRSIPNKLGGVLALLLSILVLIFIPMLQTSKQRSMMFRPFSQLLFWTLIADLLTLTWIGGQPVEHPYIIVGQLASILYFLLILVLMPTAGLIENKLLKW</sequence>